<protein>
    <recommendedName>
        <fullName evidence="1">Catalase-peroxidase</fullName>
        <shortName evidence="1">CP</shortName>
        <ecNumber evidence="1">1.11.1.21</ecNumber>
    </recommendedName>
    <alternativeName>
        <fullName evidence="1">Peroxidase/catalase</fullName>
    </alternativeName>
</protein>
<evidence type="ECO:0000255" key="1">
    <source>
        <dbReference type="HAMAP-Rule" id="MF_01961"/>
    </source>
</evidence>
<evidence type="ECO:0000256" key="2">
    <source>
        <dbReference type="SAM" id="MobiDB-lite"/>
    </source>
</evidence>
<reference key="1">
    <citation type="submission" date="2008-05" db="EMBL/GenBank/DDBJ databases">
        <title>Complete genome sequence of Clostridium botulinum E3 str. Alaska E43.</title>
        <authorList>
            <person name="Brinkac L.M."/>
            <person name="Brown J.L."/>
            <person name="Bruce D."/>
            <person name="Detter C."/>
            <person name="Munk C."/>
            <person name="Smith L.A."/>
            <person name="Smith T.J."/>
            <person name="Sutton G."/>
            <person name="Brettin T.S."/>
        </authorList>
    </citation>
    <scope>NUCLEOTIDE SEQUENCE [LARGE SCALE GENOMIC DNA]</scope>
    <source>
        <strain>Alaska E43 / Type E3</strain>
    </source>
</reference>
<feature type="chain" id="PRO_0000354763" description="Catalase-peroxidase">
    <location>
        <begin position="1"/>
        <end position="730"/>
    </location>
</feature>
<feature type="region of interest" description="Disordered" evidence="2">
    <location>
        <begin position="1"/>
        <end position="21"/>
    </location>
</feature>
<feature type="active site" description="Proton acceptor" evidence="1">
    <location>
        <position position="96"/>
    </location>
</feature>
<feature type="binding site" description="axial binding residue" evidence="1">
    <location>
        <position position="259"/>
    </location>
    <ligand>
        <name>heme b</name>
        <dbReference type="ChEBI" id="CHEBI:60344"/>
    </ligand>
    <ligandPart>
        <name>Fe</name>
        <dbReference type="ChEBI" id="CHEBI:18248"/>
    </ligandPart>
</feature>
<feature type="site" description="Transition state stabilizer" evidence="1">
    <location>
        <position position="92"/>
    </location>
</feature>
<feature type="cross-link" description="Tryptophyl-tyrosyl-methioninium (Trp-Tyr) (with M-244)" evidence="1">
    <location>
        <begin position="95"/>
        <end position="218"/>
    </location>
</feature>
<feature type="cross-link" description="Tryptophyl-tyrosyl-methioninium (Tyr-Met) (with W-95)" evidence="1">
    <location>
        <begin position="218"/>
        <end position="244"/>
    </location>
</feature>
<dbReference type="EC" id="1.11.1.21" evidence="1"/>
<dbReference type="EMBL" id="CP001078">
    <property type="protein sequence ID" value="ACD52530.1"/>
    <property type="molecule type" value="Genomic_DNA"/>
</dbReference>
<dbReference type="RefSeq" id="WP_012450656.1">
    <property type="nucleotide sequence ID" value="NC_010723.1"/>
</dbReference>
<dbReference type="SMR" id="B2V515"/>
<dbReference type="KEGG" id="cbt:CLH_1313"/>
<dbReference type="HOGENOM" id="CLU_025424_2_0_9"/>
<dbReference type="GO" id="GO:0005829">
    <property type="term" value="C:cytosol"/>
    <property type="evidence" value="ECO:0007669"/>
    <property type="project" value="TreeGrafter"/>
</dbReference>
<dbReference type="GO" id="GO:0004096">
    <property type="term" value="F:catalase activity"/>
    <property type="evidence" value="ECO:0007669"/>
    <property type="project" value="UniProtKB-UniRule"/>
</dbReference>
<dbReference type="GO" id="GO:0020037">
    <property type="term" value="F:heme binding"/>
    <property type="evidence" value="ECO:0007669"/>
    <property type="project" value="InterPro"/>
</dbReference>
<dbReference type="GO" id="GO:0046872">
    <property type="term" value="F:metal ion binding"/>
    <property type="evidence" value="ECO:0007669"/>
    <property type="project" value="UniProtKB-KW"/>
</dbReference>
<dbReference type="GO" id="GO:0070301">
    <property type="term" value="P:cellular response to hydrogen peroxide"/>
    <property type="evidence" value="ECO:0007669"/>
    <property type="project" value="TreeGrafter"/>
</dbReference>
<dbReference type="GO" id="GO:0042744">
    <property type="term" value="P:hydrogen peroxide catabolic process"/>
    <property type="evidence" value="ECO:0007669"/>
    <property type="project" value="UniProtKB-KW"/>
</dbReference>
<dbReference type="CDD" id="cd00649">
    <property type="entry name" value="catalase_peroxidase_1"/>
    <property type="match status" value="1"/>
</dbReference>
<dbReference type="CDD" id="cd08200">
    <property type="entry name" value="catalase_peroxidase_2"/>
    <property type="match status" value="1"/>
</dbReference>
<dbReference type="FunFam" id="1.10.420.10:FF:000002">
    <property type="entry name" value="Catalase-peroxidase"/>
    <property type="match status" value="1"/>
</dbReference>
<dbReference type="FunFam" id="1.10.420.10:FF:000004">
    <property type="entry name" value="Catalase-peroxidase"/>
    <property type="match status" value="1"/>
</dbReference>
<dbReference type="FunFam" id="1.10.520.10:FF:000002">
    <property type="entry name" value="Catalase-peroxidase"/>
    <property type="match status" value="1"/>
</dbReference>
<dbReference type="Gene3D" id="1.10.520.10">
    <property type="match status" value="2"/>
</dbReference>
<dbReference type="Gene3D" id="1.10.420.10">
    <property type="entry name" value="Peroxidase, domain 2"/>
    <property type="match status" value="2"/>
</dbReference>
<dbReference type="HAMAP" id="MF_01961">
    <property type="entry name" value="Catal_peroxid"/>
    <property type="match status" value="1"/>
</dbReference>
<dbReference type="InterPro" id="IPR000763">
    <property type="entry name" value="Catalase_peroxidase"/>
</dbReference>
<dbReference type="InterPro" id="IPR002016">
    <property type="entry name" value="Haem_peroxidase"/>
</dbReference>
<dbReference type="InterPro" id="IPR010255">
    <property type="entry name" value="Haem_peroxidase_sf"/>
</dbReference>
<dbReference type="InterPro" id="IPR019794">
    <property type="entry name" value="Peroxidases_AS"/>
</dbReference>
<dbReference type="InterPro" id="IPR019793">
    <property type="entry name" value="Peroxidases_heam-ligand_BS"/>
</dbReference>
<dbReference type="NCBIfam" id="TIGR00198">
    <property type="entry name" value="cat_per_HPI"/>
    <property type="match status" value="1"/>
</dbReference>
<dbReference type="NCBIfam" id="NF011635">
    <property type="entry name" value="PRK15061.1"/>
    <property type="match status" value="1"/>
</dbReference>
<dbReference type="PANTHER" id="PTHR30555:SF0">
    <property type="entry name" value="CATALASE-PEROXIDASE"/>
    <property type="match status" value="1"/>
</dbReference>
<dbReference type="PANTHER" id="PTHR30555">
    <property type="entry name" value="HYDROPEROXIDASE I, BIFUNCTIONAL CATALASE-PEROXIDASE"/>
    <property type="match status" value="1"/>
</dbReference>
<dbReference type="Pfam" id="PF00141">
    <property type="entry name" value="peroxidase"/>
    <property type="match status" value="2"/>
</dbReference>
<dbReference type="PRINTS" id="PR00460">
    <property type="entry name" value="BPEROXIDASE"/>
</dbReference>
<dbReference type="PRINTS" id="PR00458">
    <property type="entry name" value="PEROXIDASE"/>
</dbReference>
<dbReference type="SUPFAM" id="SSF48113">
    <property type="entry name" value="Heme-dependent peroxidases"/>
    <property type="match status" value="2"/>
</dbReference>
<dbReference type="PROSITE" id="PS00435">
    <property type="entry name" value="PEROXIDASE_1"/>
    <property type="match status" value="1"/>
</dbReference>
<dbReference type="PROSITE" id="PS00436">
    <property type="entry name" value="PEROXIDASE_2"/>
    <property type="match status" value="1"/>
</dbReference>
<dbReference type="PROSITE" id="PS50873">
    <property type="entry name" value="PEROXIDASE_4"/>
    <property type="match status" value="1"/>
</dbReference>
<proteinExistence type="inferred from homology"/>
<keyword id="KW-0349">Heme</keyword>
<keyword id="KW-0376">Hydrogen peroxide</keyword>
<keyword id="KW-0408">Iron</keyword>
<keyword id="KW-0479">Metal-binding</keyword>
<keyword id="KW-0560">Oxidoreductase</keyword>
<keyword id="KW-0575">Peroxidase</keyword>
<accession>B2V515</accession>
<sequence length="730" mass="82181">MTENKCPVTGKMSKATAGSGTTNKDWWPNQLNLNILHQNSQLSNPMSKDFNYAEEFKKLDFQALKVDLYMLMTDSQIWWPADYGNYGPFFIRMAWHSAGTYRVGDGRGGGSFGLQRFAPLNSWPDNINLDKARRLLWPIKKKYGNKISWADLMILTGNCALESMGLKTLGFGGGRVDVWEPQEDIYWGSEKEWLGDEREKDDEELENPLAAVQMGLIYVNPEGPNGNPDPLGSAHDVRETFARMAMNDEETVALVAGGHTFGKCHGAASPSYVGPAPEAAPIEEQGLGWKNTYGSGNGDDTIGSGLEGAWKANPTKWTMGYLKTLFKYDWELVKSPAGAYQWLAKNVDEEDMVIDAEDSTKKHRPMMTTADLGLRYDPIYEPIARNYLKNPEKFAHDFAAAWFKLTHRDMGPISRYLGPEVPKESFIWQDPIPLVKHKLITKKDITHIKKKILDSGLSISDLVATAWASASTFRGSDKRGGANGARIRLEPQKNWEVNEPKKLNNVLNTLKQIKENFNSYHSKDKKVSLADIIILGGCVGIEQAAKRAGYNINVPFIPGRTDATQKQTDVKSFAVLEPKGDGFRNYLKTKYVVKPEDMLIDRAQLLTLTAPEMTVLIGGMRVLNCNYNKSKDGVFTNRPECLTNDFFVNLLDMNTVWKPKSEGKDRFEGFDRETGELKWTATRVDLIFGSNSQLRAIAEVYACDDNKEKFIQDFIFAWNKIMNADRFEIK</sequence>
<comment type="function">
    <text evidence="1">Bifunctional enzyme with both catalase and broad-spectrum peroxidase activity.</text>
</comment>
<comment type="catalytic activity">
    <reaction evidence="1">
        <text>H2O2 + AH2 = A + 2 H2O</text>
        <dbReference type="Rhea" id="RHEA:30275"/>
        <dbReference type="ChEBI" id="CHEBI:13193"/>
        <dbReference type="ChEBI" id="CHEBI:15377"/>
        <dbReference type="ChEBI" id="CHEBI:16240"/>
        <dbReference type="ChEBI" id="CHEBI:17499"/>
        <dbReference type="EC" id="1.11.1.21"/>
    </reaction>
</comment>
<comment type="catalytic activity">
    <reaction evidence="1">
        <text>2 H2O2 = O2 + 2 H2O</text>
        <dbReference type="Rhea" id="RHEA:20309"/>
        <dbReference type="ChEBI" id="CHEBI:15377"/>
        <dbReference type="ChEBI" id="CHEBI:15379"/>
        <dbReference type="ChEBI" id="CHEBI:16240"/>
        <dbReference type="EC" id="1.11.1.21"/>
    </reaction>
</comment>
<comment type="cofactor">
    <cofactor evidence="1">
        <name>heme b</name>
        <dbReference type="ChEBI" id="CHEBI:60344"/>
    </cofactor>
    <text evidence="1">Binds 1 heme b (iron(II)-protoporphyrin IX) group per dimer.</text>
</comment>
<comment type="subunit">
    <text evidence="1">Homodimer or homotetramer.</text>
</comment>
<comment type="PTM">
    <text evidence="1">Formation of the three residue Trp-Tyr-Met cross-link is important for the catalase, but not the peroxidase activity of the enzyme.</text>
</comment>
<comment type="similarity">
    <text evidence="1">Belongs to the peroxidase family. Peroxidase/catalase subfamily.</text>
</comment>
<name>KATG_CLOBA</name>
<gene>
    <name evidence="1" type="primary">katG</name>
    <name type="ordered locus">CLH_1313</name>
</gene>
<organism>
    <name type="scientific">Clostridium botulinum (strain Alaska E43 / Type E3)</name>
    <dbReference type="NCBI Taxonomy" id="508767"/>
    <lineage>
        <taxon>Bacteria</taxon>
        <taxon>Bacillati</taxon>
        <taxon>Bacillota</taxon>
        <taxon>Clostridia</taxon>
        <taxon>Eubacteriales</taxon>
        <taxon>Clostridiaceae</taxon>
        <taxon>Clostridium</taxon>
    </lineage>
</organism>